<comment type="catalytic activity">
    <reaction evidence="1">
        <text>aldehydo-D-galactose 6-phosphate = keto-D-tagatose 6-phosphate</text>
        <dbReference type="Rhea" id="RHEA:13033"/>
        <dbReference type="ChEBI" id="CHEBI:58255"/>
        <dbReference type="ChEBI" id="CHEBI:134283"/>
        <dbReference type="EC" id="5.3.1.26"/>
    </reaction>
</comment>
<comment type="pathway">
    <text evidence="1">Carbohydrate metabolism; D-galactose 6-phosphate degradation; D-tagatose 6-phosphate from D-galactose 6-phosphate: step 1/1.</text>
</comment>
<comment type="subunit">
    <text evidence="1">Heteromultimeric protein consisting of LacA and LacB.</text>
</comment>
<comment type="similarity">
    <text evidence="1">Belongs to the LacAB/RpiB family.</text>
</comment>
<evidence type="ECO:0000255" key="1">
    <source>
        <dbReference type="HAMAP-Rule" id="MF_01555"/>
    </source>
</evidence>
<protein>
    <recommendedName>
        <fullName evidence="1">Galactose-6-phosphate isomerase subunit LacA</fullName>
        <ecNumber evidence="1">5.3.1.26</ecNumber>
    </recommendedName>
</protein>
<sequence length="142" mass="15395">MAIIIGSDEAGKRLKEVIKSYLLDNKYDVVDVTEGQEVDFVDATLAVAKDVQSQEGNLGIVIDAFGAGSFMVATKIKGMIAAEVSDERSGYMTRGHNNSRMITMGSEIVGDTLAKNVVKGFVEGKYDGGRHQIRVDMLNKMC</sequence>
<name>LACA_STAAE</name>
<feature type="chain" id="PRO_1000073578" description="Galactose-6-phosphate isomerase subunit LacA">
    <location>
        <begin position="1"/>
        <end position="142"/>
    </location>
</feature>
<dbReference type="EC" id="5.3.1.26" evidence="1"/>
<dbReference type="EMBL" id="AP009351">
    <property type="protein sequence ID" value="BAF68371.1"/>
    <property type="molecule type" value="Genomic_DNA"/>
</dbReference>
<dbReference type="RefSeq" id="WP_000974608.1">
    <property type="nucleotide sequence ID" value="NZ_JBBIAE010000006.1"/>
</dbReference>
<dbReference type="SMR" id="A6QJ39"/>
<dbReference type="GeneID" id="98347039"/>
<dbReference type="KEGG" id="sae:NWMN_2099"/>
<dbReference type="HOGENOM" id="CLU_091396_4_2_9"/>
<dbReference type="UniPathway" id="UPA00702">
    <property type="reaction ID" value="UER00714"/>
</dbReference>
<dbReference type="Proteomes" id="UP000006386">
    <property type="component" value="Chromosome"/>
</dbReference>
<dbReference type="GO" id="GO:0050044">
    <property type="term" value="F:galactose-6-phosphate isomerase activity"/>
    <property type="evidence" value="ECO:0007669"/>
    <property type="project" value="UniProtKB-UniRule"/>
</dbReference>
<dbReference type="GO" id="GO:0004751">
    <property type="term" value="F:ribose-5-phosphate isomerase activity"/>
    <property type="evidence" value="ECO:0007669"/>
    <property type="project" value="TreeGrafter"/>
</dbReference>
<dbReference type="GO" id="GO:0019316">
    <property type="term" value="P:D-allose catabolic process"/>
    <property type="evidence" value="ECO:0007669"/>
    <property type="project" value="TreeGrafter"/>
</dbReference>
<dbReference type="GO" id="GO:0019388">
    <property type="term" value="P:galactose catabolic process"/>
    <property type="evidence" value="ECO:0007669"/>
    <property type="project" value="UniProtKB-UniPathway"/>
</dbReference>
<dbReference type="GO" id="GO:0019512">
    <property type="term" value="P:lactose catabolic process via tagatose-6-phosphate"/>
    <property type="evidence" value="ECO:0007669"/>
    <property type="project" value="UniProtKB-UniRule"/>
</dbReference>
<dbReference type="GO" id="GO:0009052">
    <property type="term" value="P:pentose-phosphate shunt, non-oxidative branch"/>
    <property type="evidence" value="ECO:0007669"/>
    <property type="project" value="TreeGrafter"/>
</dbReference>
<dbReference type="Gene3D" id="3.40.1400.10">
    <property type="entry name" value="Sugar-phosphate isomerase, RpiB/LacA/LacB"/>
    <property type="match status" value="1"/>
</dbReference>
<dbReference type="HAMAP" id="MF_01555">
    <property type="entry name" value="LacA"/>
    <property type="match status" value="1"/>
</dbReference>
<dbReference type="InterPro" id="IPR004783">
    <property type="entry name" value="LacA"/>
</dbReference>
<dbReference type="InterPro" id="IPR003500">
    <property type="entry name" value="RpiB_LacA_LacB"/>
</dbReference>
<dbReference type="InterPro" id="IPR036569">
    <property type="entry name" value="RpiB_LacA_LacB_sf"/>
</dbReference>
<dbReference type="NCBIfam" id="TIGR01118">
    <property type="entry name" value="lacA"/>
    <property type="match status" value="1"/>
</dbReference>
<dbReference type="NCBIfam" id="NF006380">
    <property type="entry name" value="PRK08621.1"/>
    <property type="match status" value="1"/>
</dbReference>
<dbReference type="NCBIfam" id="TIGR00689">
    <property type="entry name" value="rpiB_lacA_lacB"/>
    <property type="match status" value="1"/>
</dbReference>
<dbReference type="PANTHER" id="PTHR30345:SF5">
    <property type="entry name" value="GALACTOSE-6-PHOSPHATE ISOMERASE SUBUNIT LACA"/>
    <property type="match status" value="1"/>
</dbReference>
<dbReference type="PANTHER" id="PTHR30345">
    <property type="entry name" value="RIBOSE-5-PHOSPHATE ISOMERASE B"/>
    <property type="match status" value="1"/>
</dbReference>
<dbReference type="Pfam" id="PF02502">
    <property type="entry name" value="LacAB_rpiB"/>
    <property type="match status" value="1"/>
</dbReference>
<dbReference type="PIRSF" id="PIRSF005384">
    <property type="entry name" value="RpiB_LacA_B"/>
    <property type="match status" value="1"/>
</dbReference>
<dbReference type="SUPFAM" id="SSF89623">
    <property type="entry name" value="Ribose/Galactose isomerase RpiB/AlsB"/>
    <property type="match status" value="1"/>
</dbReference>
<accession>A6QJ39</accession>
<keyword id="KW-0413">Isomerase</keyword>
<keyword id="KW-0423">Lactose metabolism</keyword>
<proteinExistence type="inferred from homology"/>
<gene>
    <name evidence="1" type="primary">lacA</name>
    <name type="ordered locus">NWMN_2099</name>
</gene>
<reference key="1">
    <citation type="journal article" date="2008" name="J. Bacteriol.">
        <title>Genome sequence of Staphylococcus aureus strain Newman and comparative analysis of staphylococcal genomes: polymorphism and evolution of two major pathogenicity islands.</title>
        <authorList>
            <person name="Baba T."/>
            <person name="Bae T."/>
            <person name="Schneewind O."/>
            <person name="Takeuchi F."/>
            <person name="Hiramatsu K."/>
        </authorList>
    </citation>
    <scope>NUCLEOTIDE SEQUENCE [LARGE SCALE GENOMIC DNA]</scope>
    <source>
        <strain>Newman</strain>
    </source>
</reference>
<organism>
    <name type="scientific">Staphylococcus aureus (strain Newman)</name>
    <dbReference type="NCBI Taxonomy" id="426430"/>
    <lineage>
        <taxon>Bacteria</taxon>
        <taxon>Bacillati</taxon>
        <taxon>Bacillota</taxon>
        <taxon>Bacilli</taxon>
        <taxon>Bacillales</taxon>
        <taxon>Staphylococcaceae</taxon>
        <taxon>Staphylococcus</taxon>
    </lineage>
</organism>